<feature type="chain" id="PRO_0000093579" description="Short neurotoxin 1">
    <location>
        <begin position="1"/>
        <end position="60"/>
    </location>
</feature>
<feature type="disulfide bond" evidence="1">
    <location>
        <begin position="3"/>
        <end position="22"/>
    </location>
</feature>
<feature type="disulfide bond" evidence="1">
    <location>
        <begin position="17"/>
        <end position="39"/>
    </location>
</feature>
<feature type="disulfide bond" evidence="1">
    <location>
        <begin position="41"/>
        <end position="52"/>
    </location>
</feature>
<feature type="disulfide bond" evidence="1">
    <location>
        <begin position="53"/>
        <end position="58"/>
    </location>
</feature>
<organism>
    <name type="scientific">Hydrophis ornatus</name>
    <name type="common">Ornate reef seasnake</name>
    <dbReference type="NCBI Taxonomy" id="8685"/>
    <lineage>
        <taxon>Eukaryota</taxon>
        <taxon>Metazoa</taxon>
        <taxon>Chordata</taxon>
        <taxon>Craniata</taxon>
        <taxon>Vertebrata</taxon>
        <taxon>Euteleostomi</taxon>
        <taxon>Lepidosauria</taxon>
        <taxon>Squamata</taxon>
        <taxon>Bifurcata</taxon>
        <taxon>Unidentata</taxon>
        <taxon>Episquamata</taxon>
        <taxon>Toxicofera</taxon>
        <taxon>Serpentes</taxon>
        <taxon>Colubroidea</taxon>
        <taxon>Elapidae</taxon>
        <taxon>Hydrophiinae</taxon>
        <taxon>Hydrophis</taxon>
    </lineage>
</organism>
<dbReference type="PIR" id="B90321">
    <property type="entry name" value="N1AT1F"/>
</dbReference>
<dbReference type="SMR" id="P68413"/>
<dbReference type="GO" id="GO:0005576">
    <property type="term" value="C:extracellular region"/>
    <property type="evidence" value="ECO:0007669"/>
    <property type="project" value="UniProtKB-SubCell"/>
</dbReference>
<dbReference type="GO" id="GO:0030550">
    <property type="term" value="F:acetylcholine receptor inhibitor activity"/>
    <property type="evidence" value="ECO:0007669"/>
    <property type="project" value="UniProtKB-KW"/>
</dbReference>
<dbReference type="GO" id="GO:0099106">
    <property type="term" value="F:ion channel regulator activity"/>
    <property type="evidence" value="ECO:0007669"/>
    <property type="project" value="UniProtKB-KW"/>
</dbReference>
<dbReference type="GO" id="GO:0090729">
    <property type="term" value="F:toxin activity"/>
    <property type="evidence" value="ECO:0007669"/>
    <property type="project" value="UniProtKB-KW"/>
</dbReference>
<dbReference type="CDD" id="cd00206">
    <property type="entry name" value="TFP_snake_toxin"/>
    <property type="match status" value="1"/>
</dbReference>
<dbReference type="Gene3D" id="2.10.60.10">
    <property type="entry name" value="CD59"/>
    <property type="match status" value="1"/>
</dbReference>
<dbReference type="InterPro" id="IPR003571">
    <property type="entry name" value="Snake_3FTx"/>
</dbReference>
<dbReference type="InterPro" id="IPR045860">
    <property type="entry name" value="Snake_toxin-like_sf"/>
</dbReference>
<dbReference type="InterPro" id="IPR018354">
    <property type="entry name" value="Snake_toxin_con_site"/>
</dbReference>
<dbReference type="InterPro" id="IPR054131">
    <property type="entry name" value="Toxin_cobra-type"/>
</dbReference>
<dbReference type="Pfam" id="PF21947">
    <property type="entry name" value="Toxin_cobra-type"/>
    <property type="match status" value="1"/>
</dbReference>
<dbReference type="SUPFAM" id="SSF57302">
    <property type="entry name" value="Snake toxin-like"/>
    <property type="match status" value="1"/>
</dbReference>
<dbReference type="PROSITE" id="PS00272">
    <property type="entry name" value="SNAKE_TOXIN"/>
    <property type="match status" value="1"/>
</dbReference>
<comment type="function">
    <text evidence="2">Binds to muscle nicotinic acetylcholine receptor (nAChR) and inhibit acetylcholine from binding to the receptor, thereby impairing neuromuscular transmission.</text>
</comment>
<comment type="subcellular location">
    <subcellularLocation>
        <location evidence="3">Secreted</location>
    </subcellularLocation>
</comment>
<comment type="tissue specificity">
    <text evidence="4">Expressed by the venom gland.</text>
</comment>
<comment type="similarity">
    <text evidence="4">Belongs to the three-finger toxin family. Short-chain subfamily. Type I alpha-neurotoxin sub-subfamily.</text>
</comment>
<comment type="caution">
    <text evidence="4">The amino acid sequence of this toxin was deduced to be identical with that of toxin Astrotia stokesi A on the basis of identity of the tryptic peptide 'map' and the amino acid composition of each peptide.</text>
</comment>
<protein>
    <recommendedName>
        <fullName>Short neurotoxin 1</fullName>
    </recommendedName>
    <alternativeName>
        <fullName>Toxin A</fullName>
    </alternativeName>
</protein>
<accession>P68413</accession>
<accession>P01438</accession>
<accession>P10461</accession>
<accession>P19005</accession>
<proteinExistence type="evidence at protein level"/>
<reference key="1">
    <citation type="journal article" date="1983" name="Biochem. J.">
        <title>Neurotoxins from the venoms of the sea snakes Hydrophis ornatus and Hydrophis lapemoides.</title>
        <authorList>
            <person name="Tamiya N."/>
            <person name="Maeda N."/>
            <person name="Cogger H.G."/>
        </authorList>
    </citation>
    <scope>AMINO-ACID COMPOSITION OF TRYPTIC PEPTIDES</scope>
    <scope>SUBCELLULAR LOCATION</scope>
    <source>
        <tissue>Venom</tissue>
    </source>
</reference>
<keyword id="KW-0008">Acetylcholine receptor inhibiting toxin</keyword>
<keyword id="KW-1015">Disulfide bond</keyword>
<keyword id="KW-0872">Ion channel impairing toxin</keyword>
<keyword id="KW-0528">Neurotoxin</keyword>
<keyword id="KW-0629">Postsynaptic neurotoxin</keyword>
<keyword id="KW-0964">Secreted</keyword>
<keyword id="KW-0800">Toxin</keyword>
<sequence>MTCCNQQSSQPKTTTNCAGNSCYKKTWSDHRGTIIERGCGCPQVKSGIKLECCHTNECNN</sequence>
<name>3S11_HYDOR</name>
<evidence type="ECO:0000250" key="1">
    <source>
        <dbReference type="UniProtKB" id="P0C1Z0"/>
    </source>
</evidence>
<evidence type="ECO:0000250" key="2">
    <source>
        <dbReference type="UniProtKB" id="P60775"/>
    </source>
</evidence>
<evidence type="ECO:0000269" key="3">
    <source>
    </source>
</evidence>
<evidence type="ECO:0000305" key="4"/>